<accession>Q466T6</accession>
<gene>
    <name evidence="1" type="primary">trm1</name>
    <name type="ordered locus">Mbar_A3224</name>
</gene>
<organism>
    <name type="scientific">Methanosarcina barkeri (strain Fusaro / DSM 804)</name>
    <dbReference type="NCBI Taxonomy" id="269797"/>
    <lineage>
        <taxon>Archaea</taxon>
        <taxon>Methanobacteriati</taxon>
        <taxon>Methanobacteriota</taxon>
        <taxon>Stenosarchaea group</taxon>
        <taxon>Methanomicrobia</taxon>
        <taxon>Methanosarcinales</taxon>
        <taxon>Methanosarcinaceae</taxon>
        <taxon>Methanosarcina</taxon>
    </lineage>
</organism>
<proteinExistence type="inferred from homology"/>
<feature type="chain" id="PRO_0000259375" description="tRNA (guanine(26)-N(2))-dimethyltransferase">
    <location>
        <begin position="1"/>
        <end position="388"/>
    </location>
</feature>
<feature type="domain" description="Trm1 methyltransferase" evidence="1">
    <location>
        <begin position="4"/>
        <end position="383"/>
    </location>
</feature>
<feature type="binding site" evidence="1">
    <location>
        <position position="41"/>
    </location>
    <ligand>
        <name>S-adenosyl-L-methionine</name>
        <dbReference type="ChEBI" id="CHEBI:59789"/>
    </ligand>
</feature>
<feature type="binding site" evidence="1">
    <location>
        <position position="78"/>
    </location>
    <ligand>
        <name>S-adenosyl-L-methionine</name>
        <dbReference type="ChEBI" id="CHEBI:59789"/>
    </ligand>
</feature>
<feature type="binding site" evidence="1">
    <location>
        <position position="94"/>
    </location>
    <ligand>
        <name>S-adenosyl-L-methionine</name>
        <dbReference type="ChEBI" id="CHEBI:59789"/>
    </ligand>
</feature>
<feature type="binding site" evidence="1">
    <location>
        <position position="123"/>
    </location>
    <ligand>
        <name>S-adenosyl-L-methionine</name>
        <dbReference type="ChEBI" id="CHEBI:59789"/>
    </ligand>
</feature>
<feature type="binding site" evidence="1">
    <location>
        <position position="251"/>
    </location>
    <ligand>
        <name>Zn(2+)</name>
        <dbReference type="ChEBI" id="CHEBI:29105"/>
    </ligand>
</feature>
<feature type="binding site" evidence="1">
    <location>
        <position position="254"/>
    </location>
    <ligand>
        <name>Zn(2+)</name>
        <dbReference type="ChEBI" id="CHEBI:29105"/>
    </ligand>
</feature>
<feature type="binding site" evidence="1">
    <location>
        <position position="271"/>
    </location>
    <ligand>
        <name>Zn(2+)</name>
        <dbReference type="ChEBI" id="CHEBI:29105"/>
    </ligand>
</feature>
<feature type="binding site" evidence="1">
    <location>
        <position position="274"/>
    </location>
    <ligand>
        <name>Zn(2+)</name>
        <dbReference type="ChEBI" id="CHEBI:29105"/>
    </ligand>
</feature>
<sequence>MIYKTIVEGTTKVSVPVPPPDATFPPSAAPVFYNPEMELNRDINVAATAAFVERLLAKKELLREEVRYVDAFSASGIRGLRIAGEVGIHATMNDWSPEAFELIKENSKINGLEENTLATRKSANVLLHEQKYHIVDIDPFGTPAPFLDAASASVRGMLSVTATDTAPLCGAHLKAGIRKYASVPLNTEYHSEMGLRVLLGACARELAKHEKGMLPLLSHVTRHYVRTYLEVLPGTKQTDRTLKSMGFSIHCPKCGFRGPVYGLAVHIEKECPVCGSFTQIAGPLWLGPFREQAFCDEVISELEMHPLNTKDKAKKIITFCRDELDIPMFYDQHVICKELGASATGIEILIEALKAHGFEASRTHFSGTSFRTDAPITEIKEIIRALSW</sequence>
<reference key="1">
    <citation type="journal article" date="2006" name="J. Bacteriol.">
        <title>The Methanosarcina barkeri genome: comparative analysis with Methanosarcina acetivorans and Methanosarcina mazei reveals extensive rearrangement within methanosarcinal genomes.</title>
        <authorList>
            <person name="Maeder D.L."/>
            <person name="Anderson I."/>
            <person name="Brettin T.S."/>
            <person name="Bruce D.C."/>
            <person name="Gilna P."/>
            <person name="Han C.S."/>
            <person name="Lapidus A."/>
            <person name="Metcalf W.W."/>
            <person name="Saunders E."/>
            <person name="Tapia R."/>
            <person name="Sowers K.R."/>
        </authorList>
    </citation>
    <scope>NUCLEOTIDE SEQUENCE [LARGE SCALE GENOMIC DNA]</scope>
    <source>
        <strain>Fusaro / DSM 804</strain>
    </source>
</reference>
<evidence type="ECO:0000255" key="1">
    <source>
        <dbReference type="HAMAP-Rule" id="MF_00290"/>
    </source>
</evidence>
<dbReference type="EC" id="2.1.1.216" evidence="1"/>
<dbReference type="EMBL" id="CP000099">
    <property type="protein sequence ID" value="AAZ72106.1"/>
    <property type="molecule type" value="Genomic_DNA"/>
</dbReference>
<dbReference type="SMR" id="Q466T6"/>
<dbReference type="STRING" id="269797.Mbar_A3224"/>
<dbReference type="PaxDb" id="269797-Mbar_A3224"/>
<dbReference type="KEGG" id="mba:Mbar_A3224"/>
<dbReference type="eggNOG" id="arCOG01219">
    <property type="taxonomic scope" value="Archaea"/>
</dbReference>
<dbReference type="HOGENOM" id="CLU_010862_5_1_2"/>
<dbReference type="OrthoDB" id="372177at2157"/>
<dbReference type="GO" id="GO:0160104">
    <property type="term" value="F:tRNA (guanine(26)-N2)-dimethyltransferase activity"/>
    <property type="evidence" value="ECO:0007669"/>
    <property type="project" value="UniProtKB-UniRule"/>
</dbReference>
<dbReference type="GO" id="GO:0000049">
    <property type="term" value="F:tRNA binding"/>
    <property type="evidence" value="ECO:0007669"/>
    <property type="project" value="UniProtKB-KW"/>
</dbReference>
<dbReference type="GO" id="GO:0002940">
    <property type="term" value="P:tRNA N2-guanine methylation"/>
    <property type="evidence" value="ECO:0007669"/>
    <property type="project" value="TreeGrafter"/>
</dbReference>
<dbReference type="CDD" id="cd02440">
    <property type="entry name" value="AdoMet_MTases"/>
    <property type="match status" value="1"/>
</dbReference>
<dbReference type="Gene3D" id="3.30.56.70">
    <property type="entry name" value="N2,N2-dimethylguanosine tRNA methyltransferase, C-terminal domain"/>
    <property type="match status" value="1"/>
</dbReference>
<dbReference type="Gene3D" id="3.40.50.150">
    <property type="entry name" value="Vaccinia Virus protein VP39"/>
    <property type="match status" value="1"/>
</dbReference>
<dbReference type="HAMAP" id="MF_00290">
    <property type="entry name" value="tRNA_dimethyltr_TRM1"/>
    <property type="match status" value="1"/>
</dbReference>
<dbReference type="InterPro" id="IPR029063">
    <property type="entry name" value="SAM-dependent_MTases_sf"/>
</dbReference>
<dbReference type="InterPro" id="IPR002905">
    <property type="entry name" value="Trm1"/>
</dbReference>
<dbReference type="InterPro" id="IPR022923">
    <property type="entry name" value="TRM1_arc_bac"/>
</dbReference>
<dbReference type="InterPro" id="IPR042296">
    <property type="entry name" value="tRNA_met_Trm1_C"/>
</dbReference>
<dbReference type="NCBIfam" id="TIGR00308">
    <property type="entry name" value="TRM1"/>
    <property type="match status" value="1"/>
</dbReference>
<dbReference type="PANTHER" id="PTHR10631">
    <property type="entry name" value="N 2 ,N 2 -DIMETHYLGUANOSINE TRNA METHYLTRANSFERASE"/>
    <property type="match status" value="1"/>
</dbReference>
<dbReference type="PANTHER" id="PTHR10631:SF3">
    <property type="entry name" value="TRNA (GUANINE(26)-N(2))-DIMETHYLTRANSFERASE"/>
    <property type="match status" value="1"/>
</dbReference>
<dbReference type="Pfam" id="PF02005">
    <property type="entry name" value="TRM"/>
    <property type="match status" value="1"/>
</dbReference>
<dbReference type="SUPFAM" id="SSF53335">
    <property type="entry name" value="S-adenosyl-L-methionine-dependent methyltransferases"/>
    <property type="match status" value="1"/>
</dbReference>
<dbReference type="PROSITE" id="PS51626">
    <property type="entry name" value="SAM_MT_TRM1"/>
    <property type="match status" value="1"/>
</dbReference>
<protein>
    <recommendedName>
        <fullName evidence="1">tRNA (guanine(26)-N(2))-dimethyltransferase</fullName>
        <ecNumber evidence="1">2.1.1.216</ecNumber>
    </recommendedName>
    <alternativeName>
        <fullName evidence="1">tRNA 2,2-dimethylguanosine-26 methyltransferase</fullName>
    </alternativeName>
    <alternativeName>
        <fullName evidence="1">tRNA(guanine-26,N(2)-N(2)) methyltransferase</fullName>
    </alternativeName>
    <alternativeName>
        <fullName evidence="1">tRNA(m(2,2)G26)dimethyltransferase</fullName>
    </alternativeName>
</protein>
<keyword id="KW-0479">Metal-binding</keyword>
<keyword id="KW-0489">Methyltransferase</keyword>
<keyword id="KW-0694">RNA-binding</keyword>
<keyword id="KW-0949">S-adenosyl-L-methionine</keyword>
<keyword id="KW-0808">Transferase</keyword>
<keyword id="KW-0819">tRNA processing</keyword>
<keyword id="KW-0820">tRNA-binding</keyword>
<keyword id="KW-0862">Zinc</keyword>
<name>TRM1_METBF</name>
<comment type="function">
    <text evidence="1">Dimethylates a single guanine residue at position 26 of a number of tRNAs using S-adenosyl-L-methionine as donor of the methyl groups.</text>
</comment>
<comment type="catalytic activity">
    <reaction evidence="1">
        <text>guanosine(26) in tRNA + 2 S-adenosyl-L-methionine = N(2)-dimethylguanosine(26) in tRNA + 2 S-adenosyl-L-homocysteine + 2 H(+)</text>
        <dbReference type="Rhea" id="RHEA:43140"/>
        <dbReference type="Rhea" id="RHEA-COMP:10359"/>
        <dbReference type="Rhea" id="RHEA-COMP:10360"/>
        <dbReference type="ChEBI" id="CHEBI:15378"/>
        <dbReference type="ChEBI" id="CHEBI:57856"/>
        <dbReference type="ChEBI" id="CHEBI:59789"/>
        <dbReference type="ChEBI" id="CHEBI:74269"/>
        <dbReference type="ChEBI" id="CHEBI:74513"/>
        <dbReference type="EC" id="2.1.1.216"/>
    </reaction>
</comment>
<comment type="similarity">
    <text evidence="1">Belongs to the class I-like SAM-binding methyltransferase superfamily. Trm1 family.</text>
</comment>